<accession>A5GIB5</accession>
<organism>
    <name type="scientific">Synechococcus sp. (strain WH7803)</name>
    <dbReference type="NCBI Taxonomy" id="32051"/>
    <lineage>
        <taxon>Bacteria</taxon>
        <taxon>Bacillati</taxon>
        <taxon>Cyanobacteriota</taxon>
        <taxon>Cyanophyceae</taxon>
        <taxon>Synechococcales</taxon>
        <taxon>Synechococcaceae</taxon>
        <taxon>Synechococcus</taxon>
    </lineage>
</organism>
<evidence type="ECO:0000255" key="1">
    <source>
        <dbReference type="HAMAP-Rule" id="MF_01357"/>
    </source>
</evidence>
<comment type="function">
    <text evidence="1">NDH-1 shuttles electrons from an unknown electron donor, via FMN and iron-sulfur (Fe-S) centers, to quinones in the respiratory and/or the photosynthetic chain. The immediate electron acceptor for the enzyme in this species is believed to be plastoquinone. Couples the redox reaction to proton translocation, and thus conserves the redox energy in a proton gradient. Cyanobacterial NDH-1 also plays a role in inorganic carbon-concentration.</text>
</comment>
<comment type="catalytic activity">
    <reaction evidence="1">
        <text>a plastoquinone + NADH + (n+1) H(+)(in) = a plastoquinol + NAD(+) + n H(+)(out)</text>
        <dbReference type="Rhea" id="RHEA:42608"/>
        <dbReference type="Rhea" id="RHEA-COMP:9561"/>
        <dbReference type="Rhea" id="RHEA-COMP:9562"/>
        <dbReference type="ChEBI" id="CHEBI:15378"/>
        <dbReference type="ChEBI" id="CHEBI:17757"/>
        <dbReference type="ChEBI" id="CHEBI:57540"/>
        <dbReference type="ChEBI" id="CHEBI:57945"/>
        <dbReference type="ChEBI" id="CHEBI:62192"/>
    </reaction>
</comment>
<comment type="catalytic activity">
    <reaction evidence="1">
        <text>a plastoquinone + NADPH + (n+1) H(+)(in) = a plastoquinol + NADP(+) + n H(+)(out)</text>
        <dbReference type="Rhea" id="RHEA:42612"/>
        <dbReference type="Rhea" id="RHEA-COMP:9561"/>
        <dbReference type="Rhea" id="RHEA-COMP:9562"/>
        <dbReference type="ChEBI" id="CHEBI:15378"/>
        <dbReference type="ChEBI" id="CHEBI:17757"/>
        <dbReference type="ChEBI" id="CHEBI:57783"/>
        <dbReference type="ChEBI" id="CHEBI:58349"/>
        <dbReference type="ChEBI" id="CHEBI:62192"/>
    </reaction>
</comment>
<comment type="subunit">
    <text evidence="1">NDH-1 can be composed of about 15 different subunits; different subcomplexes with different compositions have been identified which probably have different functions.</text>
</comment>
<comment type="subcellular location">
    <subcellularLocation>
        <location evidence="1">Cellular thylakoid membrane</location>
        <topology evidence="1">Peripheral membrane protein</topology>
        <orientation evidence="1">Cytoplasmic side</orientation>
    </subcellularLocation>
</comment>
<comment type="similarity">
    <text evidence="1">Belongs to the complex I 30 kDa subunit family.</text>
</comment>
<dbReference type="EC" id="7.1.1.-" evidence="1"/>
<dbReference type="EMBL" id="CT971583">
    <property type="protein sequence ID" value="CAK22680.1"/>
    <property type="molecule type" value="Genomic_DNA"/>
</dbReference>
<dbReference type="SMR" id="A5GIB5"/>
<dbReference type="STRING" id="32051.SynWH7803_0254"/>
<dbReference type="KEGG" id="syx:SynWH7803_0254"/>
<dbReference type="eggNOG" id="COG0852">
    <property type="taxonomic scope" value="Bacteria"/>
</dbReference>
<dbReference type="HOGENOM" id="CLU_042628_9_1_3"/>
<dbReference type="OrthoDB" id="9803286at2"/>
<dbReference type="Proteomes" id="UP000001566">
    <property type="component" value="Chromosome"/>
</dbReference>
<dbReference type="GO" id="GO:0031676">
    <property type="term" value="C:plasma membrane-derived thylakoid membrane"/>
    <property type="evidence" value="ECO:0007669"/>
    <property type="project" value="UniProtKB-SubCell"/>
</dbReference>
<dbReference type="GO" id="GO:0008137">
    <property type="term" value="F:NADH dehydrogenase (ubiquinone) activity"/>
    <property type="evidence" value="ECO:0007669"/>
    <property type="project" value="InterPro"/>
</dbReference>
<dbReference type="GO" id="GO:0048038">
    <property type="term" value="F:quinone binding"/>
    <property type="evidence" value="ECO:0007669"/>
    <property type="project" value="UniProtKB-KW"/>
</dbReference>
<dbReference type="GO" id="GO:0019684">
    <property type="term" value="P:photosynthesis, light reaction"/>
    <property type="evidence" value="ECO:0007669"/>
    <property type="project" value="UniProtKB-UniRule"/>
</dbReference>
<dbReference type="Gene3D" id="3.30.460.80">
    <property type="entry name" value="NADH:ubiquinone oxidoreductase, 30kDa subunit"/>
    <property type="match status" value="1"/>
</dbReference>
<dbReference type="HAMAP" id="MF_01357">
    <property type="entry name" value="NDH1_NuoC"/>
    <property type="match status" value="1"/>
</dbReference>
<dbReference type="InterPro" id="IPR010218">
    <property type="entry name" value="NADH_DH_suC"/>
</dbReference>
<dbReference type="InterPro" id="IPR037232">
    <property type="entry name" value="NADH_quin_OxRdtase_su_C/D-like"/>
</dbReference>
<dbReference type="InterPro" id="IPR001268">
    <property type="entry name" value="NADH_UbQ_OxRdtase_30kDa_su"/>
</dbReference>
<dbReference type="InterPro" id="IPR020396">
    <property type="entry name" value="NADH_UbQ_OxRdtase_CS"/>
</dbReference>
<dbReference type="NCBIfam" id="NF009141">
    <property type="entry name" value="PRK12494.1"/>
    <property type="match status" value="1"/>
</dbReference>
<dbReference type="PANTHER" id="PTHR10884:SF14">
    <property type="entry name" value="NADH DEHYDROGENASE [UBIQUINONE] IRON-SULFUR PROTEIN 3, MITOCHONDRIAL"/>
    <property type="match status" value="1"/>
</dbReference>
<dbReference type="PANTHER" id="PTHR10884">
    <property type="entry name" value="NADH DEHYDROGENASE UBIQUINONE IRON-SULFUR PROTEIN 3"/>
    <property type="match status" value="1"/>
</dbReference>
<dbReference type="Pfam" id="PF00329">
    <property type="entry name" value="Complex1_30kDa"/>
    <property type="match status" value="1"/>
</dbReference>
<dbReference type="SUPFAM" id="SSF143243">
    <property type="entry name" value="Nqo5-like"/>
    <property type="match status" value="1"/>
</dbReference>
<dbReference type="PROSITE" id="PS00542">
    <property type="entry name" value="COMPLEX1_30K"/>
    <property type="match status" value="1"/>
</dbReference>
<protein>
    <recommendedName>
        <fullName evidence="1">NAD(P)H-quinone oxidoreductase subunit J</fullName>
        <ecNumber evidence="1">7.1.1.-</ecNumber>
    </recommendedName>
    <alternativeName>
        <fullName>NAD(P)H dehydrogenase subunit J</fullName>
    </alternativeName>
    <alternativeName>
        <fullName evidence="1">NADH-plastoquinone oxidoreductase subunit J</fullName>
    </alternativeName>
    <alternativeName>
        <fullName evidence="1">NDH-1 subunit J</fullName>
        <shortName evidence="1">NDH-J</shortName>
    </alternativeName>
</protein>
<name>NDHJ_SYNPW</name>
<sequence>MSPTPDKQANADAPVAVAPAPGPVSQWLSQQGFEHELLEPDHVGVEQIAVEALFLPVIAAALKSHGFDYLQCQGGYDEGPGERLVCFYHLLAMAEVAEGSADQVREVRLKVFLSREGQPSVPSLYGLFRGADWQERETFDMFGIQFEGHPHPKRLLMPEDWTGWPLRKDYVQPDFYEMQDAY</sequence>
<gene>
    <name evidence="1" type="primary">ndhJ</name>
    <name type="ordered locus">SynWH7803_0254</name>
</gene>
<feature type="chain" id="PRO_0000358213" description="NAD(P)H-quinone oxidoreductase subunit J">
    <location>
        <begin position="1"/>
        <end position="182"/>
    </location>
</feature>
<keyword id="KW-0472">Membrane</keyword>
<keyword id="KW-0520">NAD</keyword>
<keyword id="KW-0521">NADP</keyword>
<keyword id="KW-0618">Plastoquinone</keyword>
<keyword id="KW-0874">Quinone</keyword>
<keyword id="KW-1185">Reference proteome</keyword>
<keyword id="KW-0793">Thylakoid</keyword>
<keyword id="KW-1278">Translocase</keyword>
<keyword id="KW-0813">Transport</keyword>
<reference key="1">
    <citation type="submission" date="2006-05" db="EMBL/GenBank/DDBJ databases">
        <authorList>
            <consortium name="Genoscope"/>
        </authorList>
    </citation>
    <scope>NUCLEOTIDE SEQUENCE [LARGE SCALE GENOMIC DNA]</scope>
    <source>
        <strain>WH7803</strain>
    </source>
</reference>
<proteinExistence type="inferred from homology"/>